<evidence type="ECO:0000250" key="1"/>
<evidence type="ECO:0000250" key="2">
    <source>
        <dbReference type="UniProtKB" id="P0A9B2"/>
    </source>
</evidence>
<evidence type="ECO:0000305" key="3"/>
<sequence>MTIKVGINGFGRIGRIVFRAAQKRSDIEIVAINDLLDADYMAYMLKYDSTHGRFDGTVEVKDGHLIVNGKKIRVTAERDPANLKWDEVGVDVVAEATGLFLTDETARKHITAGAKKVVMTGPSKDNTPMFVKGANFDKYAGQDIVSNASCTTNCLAPLAKVINDNFGIIEGLMTTVHATTATQKTVDGPSHKDWRGGRGASQNIIPSSTGAAKAVGKVLPELNGKLTGMAFRVPTPNVSVVDLTVRLEKAATYEQIKAAVKAAAEGEMKGVLGYTEDDVVSTDFNGEVCTSVFDAKAGIALNDNFVKLVSWYDNETGYSNKVLDLIAHISK</sequence>
<gene>
    <name type="primary">gapA</name>
    <name type="ordered locus">Z2818</name>
    <name type="ordered locus">ECs2488</name>
</gene>
<proteinExistence type="inferred from homology"/>
<name>G3P1_ECO57</name>
<protein>
    <recommendedName>
        <fullName evidence="2">Glyceraldehyde-3-phosphate dehydrogenase A</fullName>
        <shortName evidence="2">GAPDH-A</shortName>
        <ecNumber evidence="2">1.2.1.12</ecNumber>
    </recommendedName>
    <alternativeName>
        <fullName evidence="2">NAD-dependent glyceraldehyde-3-phosphate dehydrogenase</fullName>
    </alternativeName>
</protein>
<feature type="initiator methionine" description="Removed" evidence="1">
    <location>
        <position position="1"/>
    </location>
</feature>
<feature type="chain" id="PRO_0000145651" description="Glyceraldehyde-3-phosphate dehydrogenase A">
    <location>
        <begin position="2"/>
        <end position="331"/>
    </location>
</feature>
<feature type="active site" description="Nucleophile" evidence="2">
    <location>
        <position position="150"/>
    </location>
</feature>
<feature type="binding site" evidence="2">
    <location>
        <begin position="12"/>
        <end position="13"/>
    </location>
    <ligand>
        <name>NAD(+)</name>
        <dbReference type="ChEBI" id="CHEBI:57540"/>
    </ligand>
</feature>
<feature type="binding site" evidence="2">
    <location>
        <position position="34"/>
    </location>
    <ligand>
        <name>NAD(+)</name>
        <dbReference type="ChEBI" id="CHEBI:57540"/>
    </ligand>
</feature>
<feature type="binding site" evidence="2">
    <location>
        <position position="78"/>
    </location>
    <ligand>
        <name>NAD(+)</name>
        <dbReference type="ChEBI" id="CHEBI:57540"/>
    </ligand>
</feature>
<feature type="binding site" evidence="2">
    <location>
        <position position="120"/>
    </location>
    <ligand>
        <name>NAD(+)</name>
        <dbReference type="ChEBI" id="CHEBI:57540"/>
    </ligand>
</feature>
<feature type="binding site" evidence="2">
    <location>
        <begin position="149"/>
        <end position="151"/>
    </location>
    <ligand>
        <name>D-glyceraldehyde 3-phosphate</name>
        <dbReference type="ChEBI" id="CHEBI:59776"/>
    </ligand>
</feature>
<feature type="binding site" evidence="2">
    <location>
        <position position="180"/>
    </location>
    <ligand>
        <name>D-glyceraldehyde 3-phosphate</name>
        <dbReference type="ChEBI" id="CHEBI:59776"/>
    </ligand>
</feature>
<feature type="binding site" evidence="2">
    <location>
        <begin position="209"/>
        <end position="210"/>
    </location>
    <ligand>
        <name>D-glyceraldehyde 3-phosphate</name>
        <dbReference type="ChEBI" id="CHEBI:59776"/>
    </ligand>
</feature>
<feature type="binding site" evidence="2">
    <location>
        <position position="232"/>
    </location>
    <ligand>
        <name>D-glyceraldehyde 3-phosphate</name>
        <dbReference type="ChEBI" id="CHEBI:59776"/>
    </ligand>
</feature>
<feature type="binding site" evidence="2">
    <location>
        <position position="314"/>
    </location>
    <ligand>
        <name>NAD(+)</name>
        <dbReference type="ChEBI" id="CHEBI:57540"/>
    </ligand>
</feature>
<feature type="site" description="Activates thiol group during catalysis" evidence="2">
    <location>
        <position position="177"/>
    </location>
</feature>
<feature type="modified residue" description="N6-acetyllysine" evidence="2">
    <location>
        <position position="132"/>
    </location>
</feature>
<feature type="modified residue" description="N6-acetyllysine" evidence="2">
    <location>
        <position position="138"/>
    </location>
</feature>
<feature type="modified residue" description="N6-acetyllysine" evidence="2">
    <location>
        <position position="192"/>
    </location>
</feature>
<feature type="modified residue" description="N6-acetyllysine" evidence="2">
    <location>
        <position position="249"/>
    </location>
</feature>
<comment type="function">
    <text evidence="2">Catalyzes the oxidative phosphorylation of glyceraldehyde 3-phosphate (G3P) to 1,3-bisphosphoglycerate (BPG) using the cofactor NAD. The first reaction step involves the formation of a hemiacetal intermediate between G3P and a cysteine residue, and this hemiacetal intermediate is then oxidized to a thioester, with concomitant reduction of NAD to NADH. The reduced NADH is then exchanged with the second NAD, and the thioester is attacked by a nucleophilic inorganic phosphate to produce BPG.</text>
</comment>
<comment type="catalytic activity">
    <reaction evidence="2">
        <text>D-glyceraldehyde 3-phosphate + phosphate + NAD(+) = (2R)-3-phospho-glyceroyl phosphate + NADH + H(+)</text>
        <dbReference type="Rhea" id="RHEA:10300"/>
        <dbReference type="ChEBI" id="CHEBI:15378"/>
        <dbReference type="ChEBI" id="CHEBI:43474"/>
        <dbReference type="ChEBI" id="CHEBI:57540"/>
        <dbReference type="ChEBI" id="CHEBI:57604"/>
        <dbReference type="ChEBI" id="CHEBI:57945"/>
        <dbReference type="ChEBI" id="CHEBI:59776"/>
        <dbReference type="EC" id="1.2.1.12"/>
    </reaction>
</comment>
<comment type="pathway">
    <text evidence="3">Carbohydrate degradation; glycolysis; pyruvate from D-glyceraldehyde 3-phosphate: step 1/5.</text>
</comment>
<comment type="subunit">
    <text evidence="2">Homotetramer.</text>
</comment>
<comment type="subcellular location">
    <subcellularLocation>
        <location evidence="3">Cytoplasm</location>
    </subcellularLocation>
</comment>
<comment type="similarity">
    <text evidence="3">Belongs to the glyceraldehyde-3-phosphate dehydrogenase family.</text>
</comment>
<accession>P0A9B4</accession>
<accession>P06977</accession>
<reference key="1">
    <citation type="journal article" date="2001" name="Nature">
        <title>Genome sequence of enterohaemorrhagic Escherichia coli O157:H7.</title>
        <authorList>
            <person name="Perna N.T."/>
            <person name="Plunkett G. III"/>
            <person name="Burland V."/>
            <person name="Mau B."/>
            <person name="Glasner J.D."/>
            <person name="Rose D.J."/>
            <person name="Mayhew G.F."/>
            <person name="Evans P.S."/>
            <person name="Gregor J."/>
            <person name="Kirkpatrick H.A."/>
            <person name="Posfai G."/>
            <person name="Hackett J."/>
            <person name="Klink S."/>
            <person name="Boutin A."/>
            <person name="Shao Y."/>
            <person name="Miller L."/>
            <person name="Grotbeck E.J."/>
            <person name="Davis N.W."/>
            <person name="Lim A."/>
            <person name="Dimalanta E.T."/>
            <person name="Potamousis K."/>
            <person name="Apodaca J."/>
            <person name="Anantharaman T.S."/>
            <person name="Lin J."/>
            <person name="Yen G."/>
            <person name="Schwartz D.C."/>
            <person name="Welch R.A."/>
            <person name="Blattner F.R."/>
        </authorList>
    </citation>
    <scope>NUCLEOTIDE SEQUENCE [LARGE SCALE GENOMIC DNA]</scope>
    <source>
        <strain>O157:H7 / EDL933 / ATCC 700927 / EHEC</strain>
    </source>
</reference>
<reference key="2">
    <citation type="journal article" date="2001" name="DNA Res.">
        <title>Complete genome sequence of enterohemorrhagic Escherichia coli O157:H7 and genomic comparison with a laboratory strain K-12.</title>
        <authorList>
            <person name="Hayashi T."/>
            <person name="Makino K."/>
            <person name="Ohnishi M."/>
            <person name="Kurokawa K."/>
            <person name="Ishii K."/>
            <person name="Yokoyama K."/>
            <person name="Han C.-G."/>
            <person name="Ohtsubo E."/>
            <person name="Nakayama K."/>
            <person name="Murata T."/>
            <person name="Tanaka M."/>
            <person name="Tobe T."/>
            <person name="Iida T."/>
            <person name="Takami H."/>
            <person name="Honda T."/>
            <person name="Sasakawa C."/>
            <person name="Ogasawara N."/>
            <person name="Yasunaga T."/>
            <person name="Kuhara S."/>
            <person name="Shiba T."/>
            <person name="Hattori M."/>
            <person name="Shinagawa H."/>
        </authorList>
    </citation>
    <scope>NUCLEOTIDE SEQUENCE [LARGE SCALE GENOMIC DNA]</scope>
    <source>
        <strain>O157:H7 / Sakai / RIMD 0509952 / EHEC</strain>
    </source>
</reference>
<keyword id="KW-0007">Acetylation</keyword>
<keyword id="KW-0963">Cytoplasm</keyword>
<keyword id="KW-0324">Glycolysis</keyword>
<keyword id="KW-0520">NAD</keyword>
<keyword id="KW-0547">Nucleotide-binding</keyword>
<keyword id="KW-0560">Oxidoreductase</keyword>
<keyword id="KW-1185">Reference proteome</keyword>
<dbReference type="EC" id="1.2.1.12" evidence="2"/>
<dbReference type="EMBL" id="AE005174">
    <property type="protein sequence ID" value="AAG56768.1"/>
    <property type="molecule type" value="Genomic_DNA"/>
</dbReference>
<dbReference type="EMBL" id="BA000007">
    <property type="protein sequence ID" value="BAB35911.1"/>
    <property type="molecule type" value="Genomic_DNA"/>
</dbReference>
<dbReference type="PIR" id="D85788">
    <property type="entry name" value="D85788"/>
</dbReference>
<dbReference type="PIR" id="H90939">
    <property type="entry name" value="H90939"/>
</dbReference>
<dbReference type="RefSeq" id="NP_310515.1">
    <property type="nucleotide sequence ID" value="NC_002695.1"/>
</dbReference>
<dbReference type="RefSeq" id="WP_000153502.1">
    <property type="nucleotide sequence ID" value="NZ_VOAI01000010.1"/>
</dbReference>
<dbReference type="SMR" id="P0A9B4"/>
<dbReference type="STRING" id="155864.Z2818"/>
<dbReference type="GeneID" id="913285"/>
<dbReference type="GeneID" id="93775988"/>
<dbReference type="KEGG" id="ece:Z2818"/>
<dbReference type="KEGG" id="ecs:ECs_2488"/>
<dbReference type="PATRIC" id="fig|386585.9.peg.2605"/>
<dbReference type="eggNOG" id="COG0057">
    <property type="taxonomic scope" value="Bacteria"/>
</dbReference>
<dbReference type="HOGENOM" id="CLU_030140_0_3_6"/>
<dbReference type="OMA" id="YGYTCNM"/>
<dbReference type="UniPathway" id="UPA00109">
    <property type="reaction ID" value="UER00184"/>
</dbReference>
<dbReference type="Proteomes" id="UP000000558">
    <property type="component" value="Chromosome"/>
</dbReference>
<dbReference type="Proteomes" id="UP000002519">
    <property type="component" value="Chromosome"/>
</dbReference>
<dbReference type="GO" id="GO:0005737">
    <property type="term" value="C:cytoplasm"/>
    <property type="evidence" value="ECO:0007669"/>
    <property type="project" value="UniProtKB-SubCell"/>
</dbReference>
<dbReference type="GO" id="GO:0004365">
    <property type="term" value="F:glyceraldehyde-3-phosphate dehydrogenase (NAD+) (phosphorylating) activity"/>
    <property type="evidence" value="ECO:0000250"/>
    <property type="project" value="UniProtKB"/>
</dbReference>
<dbReference type="GO" id="GO:0051287">
    <property type="term" value="F:NAD binding"/>
    <property type="evidence" value="ECO:0000250"/>
    <property type="project" value="UniProtKB"/>
</dbReference>
<dbReference type="GO" id="GO:0050661">
    <property type="term" value="F:NADP binding"/>
    <property type="evidence" value="ECO:0007669"/>
    <property type="project" value="InterPro"/>
</dbReference>
<dbReference type="GO" id="GO:0006006">
    <property type="term" value="P:glucose metabolic process"/>
    <property type="evidence" value="ECO:0007669"/>
    <property type="project" value="InterPro"/>
</dbReference>
<dbReference type="GO" id="GO:0006096">
    <property type="term" value="P:glycolytic process"/>
    <property type="evidence" value="ECO:0007669"/>
    <property type="project" value="UniProtKB-UniPathway"/>
</dbReference>
<dbReference type="CDD" id="cd18126">
    <property type="entry name" value="GAPDH_I_C"/>
    <property type="match status" value="1"/>
</dbReference>
<dbReference type="CDD" id="cd05214">
    <property type="entry name" value="GAPDH_I_N"/>
    <property type="match status" value="1"/>
</dbReference>
<dbReference type="FunFam" id="3.30.360.10:FF:000001">
    <property type="entry name" value="Glyceraldehyde-3-phosphate dehydrogenase"/>
    <property type="match status" value="1"/>
</dbReference>
<dbReference type="FunFam" id="3.40.50.720:FF:000001">
    <property type="entry name" value="Glyceraldehyde-3-phosphate dehydrogenase"/>
    <property type="match status" value="1"/>
</dbReference>
<dbReference type="Gene3D" id="3.30.360.10">
    <property type="entry name" value="Dihydrodipicolinate Reductase, domain 2"/>
    <property type="match status" value="1"/>
</dbReference>
<dbReference type="Gene3D" id="3.40.50.720">
    <property type="entry name" value="NAD(P)-binding Rossmann-like Domain"/>
    <property type="match status" value="1"/>
</dbReference>
<dbReference type="InterPro" id="IPR020831">
    <property type="entry name" value="GlycerAld/Erythrose_P_DH"/>
</dbReference>
<dbReference type="InterPro" id="IPR020830">
    <property type="entry name" value="GlycerAld_3-P_DH_AS"/>
</dbReference>
<dbReference type="InterPro" id="IPR020829">
    <property type="entry name" value="GlycerAld_3-P_DH_cat"/>
</dbReference>
<dbReference type="InterPro" id="IPR020828">
    <property type="entry name" value="GlycerAld_3-P_DH_NAD(P)-bd"/>
</dbReference>
<dbReference type="InterPro" id="IPR006424">
    <property type="entry name" value="Glyceraldehyde-3-P_DH_1"/>
</dbReference>
<dbReference type="InterPro" id="IPR036291">
    <property type="entry name" value="NAD(P)-bd_dom_sf"/>
</dbReference>
<dbReference type="NCBIfam" id="TIGR01534">
    <property type="entry name" value="GAPDH-I"/>
    <property type="match status" value="1"/>
</dbReference>
<dbReference type="NCBIfam" id="NF011954">
    <property type="entry name" value="PRK15425.1"/>
    <property type="match status" value="1"/>
</dbReference>
<dbReference type="PANTHER" id="PTHR10836">
    <property type="entry name" value="GLYCERALDEHYDE 3-PHOSPHATE DEHYDROGENASE"/>
    <property type="match status" value="1"/>
</dbReference>
<dbReference type="PANTHER" id="PTHR10836:SF76">
    <property type="entry name" value="GLYCERALDEHYDE-3-PHOSPHATE DEHYDROGENASE-RELATED"/>
    <property type="match status" value="1"/>
</dbReference>
<dbReference type="Pfam" id="PF02800">
    <property type="entry name" value="Gp_dh_C"/>
    <property type="match status" value="1"/>
</dbReference>
<dbReference type="Pfam" id="PF00044">
    <property type="entry name" value="Gp_dh_N"/>
    <property type="match status" value="1"/>
</dbReference>
<dbReference type="PIRSF" id="PIRSF000149">
    <property type="entry name" value="GAP_DH"/>
    <property type="match status" value="1"/>
</dbReference>
<dbReference type="PRINTS" id="PR00078">
    <property type="entry name" value="G3PDHDRGNASE"/>
</dbReference>
<dbReference type="SMART" id="SM00846">
    <property type="entry name" value="Gp_dh_N"/>
    <property type="match status" value="1"/>
</dbReference>
<dbReference type="SUPFAM" id="SSF55347">
    <property type="entry name" value="Glyceraldehyde-3-phosphate dehydrogenase-like, C-terminal domain"/>
    <property type="match status" value="1"/>
</dbReference>
<dbReference type="SUPFAM" id="SSF51735">
    <property type="entry name" value="NAD(P)-binding Rossmann-fold domains"/>
    <property type="match status" value="1"/>
</dbReference>
<dbReference type="PROSITE" id="PS00071">
    <property type="entry name" value="GAPDH"/>
    <property type="match status" value="1"/>
</dbReference>
<organism>
    <name type="scientific">Escherichia coli O157:H7</name>
    <dbReference type="NCBI Taxonomy" id="83334"/>
    <lineage>
        <taxon>Bacteria</taxon>
        <taxon>Pseudomonadati</taxon>
        <taxon>Pseudomonadota</taxon>
        <taxon>Gammaproteobacteria</taxon>
        <taxon>Enterobacterales</taxon>
        <taxon>Enterobacteriaceae</taxon>
        <taxon>Escherichia</taxon>
    </lineage>
</organism>